<proteinExistence type="evidence at transcript level"/>
<feature type="chain" id="PRO_0000441857" description="NEDD4-binding protein 3-A">
    <location>
        <begin position="1"/>
        <end position="573"/>
    </location>
</feature>
<feature type="region of interest" description="Disordered" evidence="3">
    <location>
        <begin position="168"/>
        <end position="216"/>
    </location>
</feature>
<feature type="region of interest" description="Disordered" evidence="3">
    <location>
        <begin position="382"/>
        <end position="407"/>
    </location>
</feature>
<feature type="coiled-coil region" evidence="2">
    <location>
        <begin position="289"/>
        <end position="539"/>
    </location>
</feature>
<feature type="compositionally biased region" description="Polar residues" evidence="3">
    <location>
        <begin position="184"/>
        <end position="196"/>
    </location>
</feature>
<feature type="compositionally biased region" description="Polar residues" evidence="3">
    <location>
        <begin position="207"/>
        <end position="216"/>
    </location>
</feature>
<reference evidence="7" key="1">
    <citation type="journal article" date="2016" name="Nature">
        <title>Genome evolution in the allotetraploid frog Xenopus laevis.</title>
        <authorList>
            <person name="Session A.M."/>
            <person name="Uno Y."/>
            <person name="Kwon T."/>
            <person name="Chapman J.A."/>
            <person name="Toyoda A."/>
            <person name="Takahashi S."/>
            <person name="Fukui A."/>
            <person name="Hikosaka A."/>
            <person name="Suzuki A."/>
            <person name="Kondo M."/>
            <person name="van Heeringen S.J."/>
            <person name="Quigley I."/>
            <person name="Heinz S."/>
            <person name="Ogino H."/>
            <person name="Ochi H."/>
            <person name="Hellsten U."/>
            <person name="Lyons J.B."/>
            <person name="Simakov O."/>
            <person name="Putnam N."/>
            <person name="Stites J."/>
            <person name="Kuroki Y."/>
            <person name="Tanaka T."/>
            <person name="Michiue T."/>
            <person name="Watanabe M."/>
            <person name="Bogdanovic O."/>
            <person name="Lister R."/>
            <person name="Georgiou G."/>
            <person name="Paranjpe S.S."/>
            <person name="van Kruijsbergen I."/>
            <person name="Shu S."/>
            <person name="Carlson J."/>
            <person name="Kinoshita T."/>
            <person name="Ohta Y."/>
            <person name="Mawaribuchi S."/>
            <person name="Jenkins J."/>
            <person name="Grimwood J."/>
            <person name="Schmutz J."/>
            <person name="Mitros T."/>
            <person name="Mozaffari S.V."/>
            <person name="Suzuki Y."/>
            <person name="Haramoto Y."/>
            <person name="Yamamoto T.S."/>
            <person name="Takagi C."/>
            <person name="Heald R."/>
            <person name="Miller K."/>
            <person name="Haudenschild C."/>
            <person name="Kitzman J."/>
            <person name="Nakayama T."/>
            <person name="Izutsu Y."/>
            <person name="Robert J."/>
            <person name="Fortriede J."/>
            <person name="Burns K."/>
            <person name="Lotay V."/>
            <person name="Karimi K."/>
            <person name="Yasuoka Y."/>
            <person name="Dichmann D.S."/>
            <person name="Flajnik M.F."/>
            <person name="Houston D.W."/>
            <person name="Shendure J."/>
            <person name="DuPasquier L."/>
            <person name="Vize P.D."/>
            <person name="Zorn A.M."/>
            <person name="Ito M."/>
            <person name="Marcotte E.M."/>
            <person name="Wallingford J.B."/>
            <person name="Ito Y."/>
            <person name="Asashima M."/>
            <person name="Ueno N."/>
            <person name="Matsuda Y."/>
            <person name="Veenstra G.J."/>
            <person name="Fujiyama A."/>
            <person name="Harland R.M."/>
            <person name="Taira M."/>
            <person name="Rokhsar D.S."/>
        </authorList>
    </citation>
    <scope>NUCLEOTIDE SEQUENCE [LARGE SCALE GENOMIC DNA]</scope>
    <source>
        <strain evidence="7">J</strain>
    </source>
</reference>
<reference evidence="6" key="2">
    <citation type="journal article" date="2013" name="Neural Dev.">
        <title>The Nedd4-binding protein 3 (N4BP3) is crucial for axonal and dendritic branching in developing neurons.</title>
        <authorList>
            <person name="Schmeisser M.J."/>
            <person name="Kuehl S.J."/>
            <person name="Schoen M."/>
            <person name="Beth N.H."/>
            <person name="Weis T.M."/>
            <person name="Grabrucker A.M."/>
            <person name="Kuehl M."/>
            <person name="Boeckers T.M."/>
        </authorList>
    </citation>
    <scope>FUNCTION</scope>
    <scope>DEVELOPMENTAL STAGE</scope>
    <scope>DISRUPTION PHENOTYPE</scope>
</reference>
<reference evidence="6" key="3">
    <citation type="journal article" date="2017" name="Dev. Biol.">
        <title>The Nedd4 binding protein 3 is required for anterior neural development in Xenopus laevis.</title>
        <authorList>
            <person name="Kiem L.M."/>
            <person name="Dietmann P."/>
            <person name="Linnemann A."/>
            <person name="Schmeisser M.J."/>
            <person name="Kuehl S.J."/>
        </authorList>
    </citation>
    <scope>FUNCTION</scope>
    <scope>DEVELOPMENTAL STAGE</scope>
    <scope>DISRUPTION PHENOTYPE</scope>
</reference>
<dbReference type="EMBL" id="CM004470">
    <property type="protein sequence ID" value="OCT88708.1"/>
    <property type="molecule type" value="Genomic_DNA"/>
</dbReference>
<dbReference type="SMR" id="A0A1L8GXY6"/>
<dbReference type="PaxDb" id="8355-A0A1L8GXY6"/>
<dbReference type="GeneID" id="108710992"/>
<dbReference type="KEGG" id="xla:108710992"/>
<dbReference type="AGR" id="Xenbase:XB-GENE-17343789"/>
<dbReference type="CTD" id="108710992"/>
<dbReference type="Xenbase" id="XB-GENE-17343789">
    <property type="gene designation" value="n4bp3.L"/>
</dbReference>
<dbReference type="OMA" id="EDPFTQA"/>
<dbReference type="OrthoDB" id="10030037at2759"/>
<dbReference type="Proteomes" id="UP000186698">
    <property type="component" value="Chromosome 3L"/>
</dbReference>
<dbReference type="Proteomes" id="UP000694892">
    <property type="component" value="Chromosome 3L"/>
</dbReference>
<dbReference type="Bgee" id="108710992">
    <property type="expression patterns" value="Expressed in heart and 18 other cell types or tissues"/>
</dbReference>
<dbReference type="GO" id="GO:0030424">
    <property type="term" value="C:axon"/>
    <property type="evidence" value="ECO:0007669"/>
    <property type="project" value="UniProtKB-SubCell"/>
</dbReference>
<dbReference type="GO" id="GO:0031410">
    <property type="term" value="C:cytoplasmic vesicle"/>
    <property type="evidence" value="ECO:0000318"/>
    <property type="project" value="GO_Central"/>
</dbReference>
<dbReference type="GO" id="GO:0030425">
    <property type="term" value="C:dendrite"/>
    <property type="evidence" value="ECO:0007669"/>
    <property type="project" value="UniProtKB-SubCell"/>
</dbReference>
<dbReference type="GO" id="GO:0007399">
    <property type="term" value="P:nervous system development"/>
    <property type="evidence" value="ECO:0007669"/>
    <property type="project" value="UniProtKB-KW"/>
</dbReference>
<dbReference type="InterPro" id="IPR033571">
    <property type="entry name" value="N4BP3"/>
</dbReference>
<dbReference type="PANTHER" id="PTHR32274">
    <property type="entry name" value="NEDD4-BINDING PROTEIN 3"/>
    <property type="match status" value="1"/>
</dbReference>
<dbReference type="PANTHER" id="PTHR32274:SF1">
    <property type="entry name" value="NEDD4-BINDING PROTEIN 3"/>
    <property type="match status" value="1"/>
</dbReference>
<dbReference type="Pfam" id="PF06818">
    <property type="entry name" value="Fez1"/>
    <property type="match status" value="2"/>
</dbReference>
<gene>
    <name evidence="6" type="primary">n4bp3-a</name>
</gene>
<evidence type="ECO:0000250" key="1">
    <source>
        <dbReference type="UniProtKB" id="Q3LUD3"/>
    </source>
</evidence>
<evidence type="ECO:0000255" key="2"/>
<evidence type="ECO:0000256" key="3">
    <source>
        <dbReference type="SAM" id="MobiDB-lite"/>
    </source>
</evidence>
<evidence type="ECO:0000269" key="4">
    <source>
    </source>
</evidence>
<evidence type="ECO:0000269" key="5">
    <source>
    </source>
</evidence>
<evidence type="ECO:0000305" key="6"/>
<evidence type="ECO:0000312" key="7">
    <source>
        <dbReference type="Proteomes" id="UP000186698"/>
    </source>
</evidence>
<name>N4B3A_XENLA</name>
<accession>A0A1L8GXY6</accession>
<comment type="function">
    <text evidence="4 5">Plays a role in axon and dendrite arborization during cranial nerve development (PubMed:24044555). Also important for neural crest migration and early development of other anterior structures including eye, brain and cranial cartilage (PubMed:28104388).</text>
</comment>
<comment type="subcellular location">
    <subcellularLocation>
        <location evidence="1">Cytoplasmic vesicle</location>
    </subcellularLocation>
    <subcellularLocation>
        <location evidence="1">Cell projection</location>
        <location evidence="1">Axon</location>
    </subcellularLocation>
    <subcellularLocation>
        <location evidence="1">Cell projection</location>
        <location evidence="1">Dendrite</location>
    </subcellularLocation>
    <text evidence="1">In developing neurons, accumulates in early growth cones and at branching points of axons and dendrites.</text>
</comment>
<comment type="developmental stage">
    <text evidence="4 5">Detected from early embryogenesis onwards (stages 11-35) (PubMed:24044555, PubMed:28104388). Expressed in the mesoderm during gastrulation (PubMed:24044555). Expressed in migrating neural crest cells, where it partially colocalizes with twist1 (PubMed:28104388). As development proceeds, shows marked expression in developing anterior structures including brain, pharyngeal arches, eye (including retina and lens), otic vesicle, heart, pronephros, liver and cranial ganglia (PubMed:24044555, PubMed:28104388).</text>
</comment>
<comment type="disruption phenotype">
    <text evidence="4 5">Morpholino knockdown severely impairs cranial nerve development, with shorter or missing cranial ganglia and reduced nerve arborization (PubMed:24044555). Neural crest migration is impaired, although neural crest induction is not significantly affected (PubMed:28104388). Brain size is reduced and cranial cartilage development is severely disrupted, leading to smaller head size (PubMed:28104388). Eyes are smaller and deformed, with coloboma formation and disrupted retinal lamination (PubMed:28104388). In eye, expression of the genes rax, pax6 and otx2 is reduced (PubMed:28104388). In brain, expression of the genes emx1, pax6, otx2, en2 and egr2 is reduced (PubMed:28104388). Tissues show increased apoptosis and reduced cell proliferation (PubMed:28104388).</text>
</comment>
<comment type="similarity">
    <text evidence="6">Belongs to the N4BP3 family.</text>
</comment>
<protein>
    <recommendedName>
        <fullName evidence="6">NEDD4-binding protein 3-A</fullName>
    </recommendedName>
</protein>
<organism evidence="7">
    <name type="scientific">Xenopus laevis</name>
    <name type="common">African clawed frog</name>
    <dbReference type="NCBI Taxonomy" id="8355"/>
    <lineage>
        <taxon>Eukaryota</taxon>
        <taxon>Metazoa</taxon>
        <taxon>Chordata</taxon>
        <taxon>Craniata</taxon>
        <taxon>Vertebrata</taxon>
        <taxon>Euteleostomi</taxon>
        <taxon>Amphibia</taxon>
        <taxon>Batrachia</taxon>
        <taxon>Anura</taxon>
        <taxon>Pipoidea</taxon>
        <taxon>Pipidae</taxon>
        <taxon>Xenopodinae</taxon>
        <taxon>Xenopus</taxon>
        <taxon>Xenopus</taxon>
    </lineage>
</organism>
<keyword id="KW-0966">Cell projection</keyword>
<keyword id="KW-0175">Coiled coil</keyword>
<keyword id="KW-0968">Cytoplasmic vesicle</keyword>
<keyword id="KW-0217">Developmental protein</keyword>
<keyword id="KW-0524">Neurogenesis</keyword>
<keyword id="KW-1185">Reference proteome</keyword>
<sequence length="573" mass="65251">MAAAQTFNSNCDPGNFHKLQSFPSESVTYTCKMGSVSSLIDKQDFPHDGFNLDFKPFPEPNCKRGLHQKELLSYLNITKKEVKSNKKFHSGLGFRREHSVEGGENDYPVFYHKDHRGTEFSKSSLPERGHLDKSRFGPSALRSNVKAFMSIQSLYQSGNKLSKSNGSLNTMSCVSSPPCRGPLQPSNSHSNNQSESGNDEEDDSLSDSRQNSINSLNSYSPGFSVARGQISASLGHINHIGGSLDQASRGTRDTMAGEKGTLSCRSMATLSRLQCSGEPPPPYEYSQSVEDVARQLEERLHEKGMEARQLRRNASDNDDPFTKVFEDKRRLWMEELDELKQMYMSKLQQISQQALRSQRALQLQLYKVQQEKKRLQEELNSLRGESEELRQKQSQSDNSGPKLEDSKWEISQKAGEISLLKQQLRDSQAEINQKLGEVVSLKSQLREAKVLVKEKEKESAELSTRLQALENAKSQAPVDLPRDNSDTIDLERLRAELMLERRQNEAQMLTFETERKVWKEEKDKVLRYQKEIQSSYREMYHRNQVLERQVLELRQGVGQSPSSPAIWMDTVET</sequence>